<reference key="1">
    <citation type="journal article" date="2002" name="Proc. Natl. Acad. Sci. U.S.A.">
        <title>Extensive mosaic structure revealed by the complete genome sequence of uropathogenic Escherichia coli.</title>
        <authorList>
            <person name="Welch R.A."/>
            <person name="Burland V."/>
            <person name="Plunkett G. III"/>
            <person name="Redford P."/>
            <person name="Roesch P."/>
            <person name="Rasko D."/>
            <person name="Buckles E.L."/>
            <person name="Liou S.-R."/>
            <person name="Boutin A."/>
            <person name="Hackett J."/>
            <person name="Stroud D."/>
            <person name="Mayhew G.F."/>
            <person name="Rose D.J."/>
            <person name="Zhou S."/>
            <person name="Schwartz D.C."/>
            <person name="Perna N.T."/>
            <person name="Mobley H.L.T."/>
            <person name="Donnenberg M.S."/>
            <person name="Blattner F.R."/>
        </authorList>
    </citation>
    <scope>NUCLEOTIDE SEQUENCE [LARGE SCALE GENOMIC DNA]</scope>
    <source>
        <strain>CFT073 / ATCC 700928 / UPEC</strain>
    </source>
</reference>
<evidence type="ECO:0000250" key="1"/>
<evidence type="ECO:0000255" key="2">
    <source>
        <dbReference type="HAMAP-Rule" id="MF_01437"/>
    </source>
</evidence>
<name>PGSA_ECOL6</name>
<feature type="initiator methionine" description="Removed" evidence="1">
    <location>
        <position position="1"/>
    </location>
</feature>
<feature type="chain" id="PRO_0000056775" description="CDP-diacylglycerol--glycerol-3-phosphate 3-phosphatidyltransferase">
    <location>
        <begin position="2"/>
        <end position="182"/>
    </location>
</feature>
<feature type="topological domain" description="Cytoplasmic" evidence="2">
    <location>
        <begin position="2"/>
        <end position="13"/>
    </location>
</feature>
<feature type="transmembrane region" description="Helical" evidence="2">
    <location>
        <begin position="14"/>
        <end position="38"/>
    </location>
</feature>
<feature type="topological domain" description="Periplasmic" evidence="2">
    <location>
        <begin position="39"/>
        <end position="61"/>
    </location>
</feature>
<feature type="transmembrane region" description="Helical" evidence="2">
    <location>
        <begin position="62"/>
        <end position="82"/>
    </location>
</feature>
<feature type="topological domain" description="Cytoplasmic" evidence="2">
    <location>
        <begin position="83"/>
        <end position="87"/>
    </location>
</feature>
<feature type="transmembrane region" description="Helical" evidence="2">
    <location>
        <begin position="88"/>
        <end position="108"/>
    </location>
</feature>
<feature type="topological domain" description="Periplasmic" evidence="2">
    <location>
        <begin position="109"/>
        <end position="146"/>
    </location>
</feature>
<feature type="transmembrane region" description="Helical" evidence="2">
    <location>
        <begin position="147"/>
        <end position="169"/>
    </location>
</feature>
<feature type="topological domain" description="Cytoplasmic" evidence="2">
    <location>
        <begin position="170"/>
        <end position="182"/>
    </location>
</feature>
<organism>
    <name type="scientific">Escherichia coli O6:H1 (strain CFT073 / ATCC 700928 / UPEC)</name>
    <dbReference type="NCBI Taxonomy" id="199310"/>
    <lineage>
        <taxon>Bacteria</taxon>
        <taxon>Pseudomonadati</taxon>
        <taxon>Pseudomonadota</taxon>
        <taxon>Gammaproteobacteria</taxon>
        <taxon>Enterobacterales</taxon>
        <taxon>Enterobacteriaceae</taxon>
        <taxon>Escherichia</taxon>
    </lineage>
</organism>
<accession>P0ABF9</accession>
<accession>P06978</accession>
<comment type="function">
    <text evidence="2">Catalyzes the conversion of cytidine diphosphate diacylglycerol (CDP-DG) and glycerol 3-phosphate into phosphatidylglycerol. Essential for the synthesis of anionic phospholipids, thereby playing a role in balancing the ratio of zwitterionic and anionic phospholipids, which is thought to be important for normal membrane function.</text>
</comment>
<comment type="catalytic activity">
    <reaction evidence="2">
        <text>a CDP-1,2-diacyl-sn-glycerol + sn-glycerol 3-phosphate = a 1,2-diacyl-sn-glycero-3-phospho-(1'-sn-glycero-3'-phosphate) + CMP + H(+)</text>
        <dbReference type="Rhea" id="RHEA:12593"/>
        <dbReference type="ChEBI" id="CHEBI:15378"/>
        <dbReference type="ChEBI" id="CHEBI:57597"/>
        <dbReference type="ChEBI" id="CHEBI:58332"/>
        <dbReference type="ChEBI" id="CHEBI:60110"/>
        <dbReference type="ChEBI" id="CHEBI:60377"/>
        <dbReference type="EC" id="2.7.8.5"/>
    </reaction>
</comment>
<comment type="pathway">
    <text evidence="2">Phospholipid metabolism; phosphatidylglycerol biosynthesis; phosphatidylglycerol from CDP-diacylglycerol: step 1/2.</text>
</comment>
<comment type="subcellular location">
    <subcellularLocation>
        <location evidence="2">Cell inner membrane</location>
        <topology evidence="2">Multi-pass membrane protein</topology>
    </subcellularLocation>
</comment>
<comment type="similarity">
    <text evidence="2">Belongs to the CDP-alcohol phosphatidyltransferase class-I family.</text>
</comment>
<keyword id="KW-0997">Cell inner membrane</keyword>
<keyword id="KW-1003">Cell membrane</keyword>
<keyword id="KW-0444">Lipid biosynthesis</keyword>
<keyword id="KW-0443">Lipid metabolism</keyword>
<keyword id="KW-0472">Membrane</keyword>
<keyword id="KW-0594">Phospholipid biosynthesis</keyword>
<keyword id="KW-1208">Phospholipid metabolism</keyword>
<keyword id="KW-1185">Reference proteome</keyword>
<keyword id="KW-0808">Transferase</keyword>
<keyword id="KW-0812">Transmembrane</keyword>
<keyword id="KW-1133">Transmembrane helix</keyword>
<sequence length="182" mass="20701">MQFNIPTLLTLFRVILIPFFVLVFYLPVTWSPFAAALIFCVAAVTDWFDGFLARRWNQSTRFGAFLDPVADKVLVAIAMVLVTEHYHSWWVTLPAATMIAREIIISALREWMAELGKRSSVAVSWIGKVKTTAQMVALAWLLWRPNIWVEYAGIALFFVAAVLTLWSMLQYLSAARADLLDQ</sequence>
<dbReference type="EC" id="2.7.8.5" evidence="2"/>
<dbReference type="EMBL" id="AE014075">
    <property type="protein sequence ID" value="AAN80784.1"/>
    <property type="molecule type" value="Genomic_DNA"/>
</dbReference>
<dbReference type="RefSeq" id="WP_001160187.1">
    <property type="nucleotide sequence ID" value="NZ_CP051263.1"/>
</dbReference>
<dbReference type="SMR" id="P0ABF9"/>
<dbReference type="STRING" id="199310.c2325"/>
<dbReference type="GeneID" id="93776217"/>
<dbReference type="KEGG" id="ecc:c2325"/>
<dbReference type="eggNOG" id="COG0558">
    <property type="taxonomic scope" value="Bacteria"/>
</dbReference>
<dbReference type="HOGENOM" id="CLU_051314_2_1_6"/>
<dbReference type="BioCyc" id="ECOL199310:C2325-MONOMER"/>
<dbReference type="UniPathway" id="UPA00084">
    <property type="reaction ID" value="UER00503"/>
</dbReference>
<dbReference type="Proteomes" id="UP000001410">
    <property type="component" value="Chromosome"/>
</dbReference>
<dbReference type="GO" id="GO:0005886">
    <property type="term" value="C:plasma membrane"/>
    <property type="evidence" value="ECO:0007669"/>
    <property type="project" value="UniProtKB-SubCell"/>
</dbReference>
<dbReference type="GO" id="GO:0008444">
    <property type="term" value="F:CDP-diacylglycerol-glycerol-3-phosphate 3-phosphatidyltransferase activity"/>
    <property type="evidence" value="ECO:0007669"/>
    <property type="project" value="UniProtKB-UniRule"/>
</dbReference>
<dbReference type="GO" id="GO:0006655">
    <property type="term" value="P:phosphatidylglycerol biosynthetic process"/>
    <property type="evidence" value="ECO:0007669"/>
    <property type="project" value="UniProtKB-UniRule"/>
</dbReference>
<dbReference type="FunFam" id="1.20.120.1760:FF:000001">
    <property type="entry name" value="CDP-diacylglycerol--glycerol-3-phosphate 3-phosphatidyltransferase"/>
    <property type="match status" value="1"/>
</dbReference>
<dbReference type="Gene3D" id="1.20.120.1760">
    <property type="match status" value="1"/>
</dbReference>
<dbReference type="HAMAP" id="MF_01437">
    <property type="entry name" value="PgsA"/>
    <property type="match status" value="1"/>
</dbReference>
<dbReference type="InterPro" id="IPR050324">
    <property type="entry name" value="CDP-alcohol_PTase-I"/>
</dbReference>
<dbReference type="InterPro" id="IPR000462">
    <property type="entry name" value="CDP-OH_P_trans"/>
</dbReference>
<dbReference type="InterPro" id="IPR043130">
    <property type="entry name" value="CDP-OH_PTrfase_TM_dom"/>
</dbReference>
<dbReference type="InterPro" id="IPR048254">
    <property type="entry name" value="CDP_ALCOHOL_P_TRANSF_CS"/>
</dbReference>
<dbReference type="InterPro" id="IPR023762">
    <property type="entry name" value="PGP_synthase_bac"/>
</dbReference>
<dbReference type="InterPro" id="IPR004570">
    <property type="entry name" value="Phosphatidylglycerol_P_synth"/>
</dbReference>
<dbReference type="NCBIfam" id="TIGR00560">
    <property type="entry name" value="pgsA"/>
    <property type="match status" value="1"/>
</dbReference>
<dbReference type="NCBIfam" id="NF008090">
    <property type="entry name" value="PRK10832.1"/>
    <property type="match status" value="1"/>
</dbReference>
<dbReference type="PANTHER" id="PTHR14269:SF62">
    <property type="entry name" value="CDP-DIACYLGLYCEROL--GLYCEROL-3-PHOSPHATE 3-PHOSPHATIDYLTRANSFERASE 1, CHLOROPLASTIC"/>
    <property type="match status" value="1"/>
</dbReference>
<dbReference type="PANTHER" id="PTHR14269">
    <property type="entry name" value="CDP-DIACYLGLYCEROL--GLYCEROL-3-PHOSPHATE 3-PHOSPHATIDYLTRANSFERASE-RELATED"/>
    <property type="match status" value="1"/>
</dbReference>
<dbReference type="Pfam" id="PF01066">
    <property type="entry name" value="CDP-OH_P_transf"/>
    <property type="match status" value="1"/>
</dbReference>
<dbReference type="PIRSF" id="PIRSF000847">
    <property type="entry name" value="Phos_ph_gly_syn"/>
    <property type="match status" value="1"/>
</dbReference>
<dbReference type="PROSITE" id="PS00379">
    <property type="entry name" value="CDP_ALCOHOL_P_TRANSF"/>
    <property type="match status" value="1"/>
</dbReference>
<gene>
    <name evidence="2" type="primary">pgsA</name>
    <name type="ordered locus">c2325</name>
</gene>
<proteinExistence type="inferred from homology"/>
<protein>
    <recommendedName>
        <fullName evidence="2">CDP-diacylglycerol--glycerol-3-phosphate 3-phosphatidyltransferase</fullName>
        <ecNumber evidence="2">2.7.8.5</ecNumber>
    </recommendedName>
    <alternativeName>
        <fullName evidence="2">Phosphatidylglycerophosphate synthase</fullName>
        <shortName evidence="2">PGP synthase</shortName>
    </alternativeName>
</protein>